<protein>
    <recommendedName>
        <fullName evidence="1">2-C-methyl-D-erythritol 2,4-cyclodiphosphate synthase</fullName>
        <shortName evidence="1">MECDP-synthase</shortName>
        <shortName evidence="1">MECPP-synthase</shortName>
        <shortName evidence="1">MECPS</shortName>
        <ecNumber evidence="1">4.6.1.12</ecNumber>
    </recommendedName>
</protein>
<accession>A0LQZ7</accession>
<reference key="1">
    <citation type="journal article" date="2009" name="Genome Res.">
        <title>Complete genome of the cellulolytic thermophile Acidothermus cellulolyticus 11B provides insights into its ecophysiological and evolutionary adaptations.</title>
        <authorList>
            <person name="Barabote R.D."/>
            <person name="Xie G."/>
            <person name="Leu D.H."/>
            <person name="Normand P."/>
            <person name="Necsulea A."/>
            <person name="Daubin V."/>
            <person name="Medigue C."/>
            <person name="Adney W.S."/>
            <person name="Xu X.C."/>
            <person name="Lapidus A."/>
            <person name="Parales R.E."/>
            <person name="Detter C."/>
            <person name="Pujic P."/>
            <person name="Bruce D."/>
            <person name="Lavire C."/>
            <person name="Challacombe J.F."/>
            <person name="Brettin T.S."/>
            <person name="Berry A.M."/>
        </authorList>
    </citation>
    <scope>NUCLEOTIDE SEQUENCE [LARGE SCALE GENOMIC DNA]</scope>
    <source>
        <strain>ATCC 43068 / DSM 8971 / 11B</strain>
    </source>
</reference>
<evidence type="ECO:0000255" key="1">
    <source>
        <dbReference type="HAMAP-Rule" id="MF_00107"/>
    </source>
</evidence>
<name>ISPF_ACIC1</name>
<keyword id="KW-0414">Isoprene biosynthesis</keyword>
<keyword id="KW-0456">Lyase</keyword>
<keyword id="KW-0479">Metal-binding</keyword>
<keyword id="KW-1185">Reference proteome</keyword>
<dbReference type="EC" id="4.6.1.12" evidence="1"/>
<dbReference type="EMBL" id="CP000481">
    <property type="protein sequence ID" value="ABK51857.1"/>
    <property type="molecule type" value="Genomic_DNA"/>
</dbReference>
<dbReference type="RefSeq" id="WP_011718921.1">
    <property type="nucleotide sequence ID" value="NC_008578.1"/>
</dbReference>
<dbReference type="SMR" id="A0LQZ7"/>
<dbReference type="FunCoup" id="A0LQZ7">
    <property type="interactions" value="210"/>
</dbReference>
<dbReference type="STRING" id="351607.Acel_0081"/>
<dbReference type="KEGG" id="ace:Acel_0081"/>
<dbReference type="eggNOG" id="COG0245">
    <property type="taxonomic scope" value="Bacteria"/>
</dbReference>
<dbReference type="HOGENOM" id="CLU_084630_1_0_11"/>
<dbReference type="InParanoid" id="A0LQZ7"/>
<dbReference type="OrthoDB" id="9804336at2"/>
<dbReference type="UniPathway" id="UPA00056">
    <property type="reaction ID" value="UER00095"/>
</dbReference>
<dbReference type="Proteomes" id="UP000008221">
    <property type="component" value="Chromosome"/>
</dbReference>
<dbReference type="GO" id="GO:0008685">
    <property type="term" value="F:2-C-methyl-D-erythritol 2,4-cyclodiphosphate synthase activity"/>
    <property type="evidence" value="ECO:0007669"/>
    <property type="project" value="UniProtKB-UniRule"/>
</dbReference>
<dbReference type="GO" id="GO:0046872">
    <property type="term" value="F:metal ion binding"/>
    <property type="evidence" value="ECO:0007669"/>
    <property type="project" value="UniProtKB-KW"/>
</dbReference>
<dbReference type="GO" id="GO:0019288">
    <property type="term" value="P:isopentenyl diphosphate biosynthetic process, methylerythritol 4-phosphate pathway"/>
    <property type="evidence" value="ECO:0007669"/>
    <property type="project" value="UniProtKB-UniRule"/>
</dbReference>
<dbReference type="GO" id="GO:0016114">
    <property type="term" value="P:terpenoid biosynthetic process"/>
    <property type="evidence" value="ECO:0007669"/>
    <property type="project" value="InterPro"/>
</dbReference>
<dbReference type="CDD" id="cd00554">
    <property type="entry name" value="MECDP_synthase"/>
    <property type="match status" value="1"/>
</dbReference>
<dbReference type="FunFam" id="3.30.1330.50:FF:000003">
    <property type="entry name" value="2-C-methyl-D-erythritol 2,4-cyclodiphosphate synthase"/>
    <property type="match status" value="1"/>
</dbReference>
<dbReference type="Gene3D" id="3.30.1330.50">
    <property type="entry name" value="2-C-methyl-D-erythritol 2,4-cyclodiphosphate synthase"/>
    <property type="match status" value="1"/>
</dbReference>
<dbReference type="HAMAP" id="MF_00107">
    <property type="entry name" value="IspF"/>
    <property type="match status" value="1"/>
</dbReference>
<dbReference type="InterPro" id="IPR003526">
    <property type="entry name" value="MECDP_synthase"/>
</dbReference>
<dbReference type="InterPro" id="IPR020555">
    <property type="entry name" value="MECDP_synthase_CS"/>
</dbReference>
<dbReference type="InterPro" id="IPR036571">
    <property type="entry name" value="MECDP_synthase_sf"/>
</dbReference>
<dbReference type="NCBIfam" id="TIGR00151">
    <property type="entry name" value="ispF"/>
    <property type="match status" value="1"/>
</dbReference>
<dbReference type="PANTHER" id="PTHR43181">
    <property type="entry name" value="2-C-METHYL-D-ERYTHRITOL 2,4-CYCLODIPHOSPHATE SYNTHASE, CHLOROPLASTIC"/>
    <property type="match status" value="1"/>
</dbReference>
<dbReference type="PANTHER" id="PTHR43181:SF1">
    <property type="entry name" value="2-C-METHYL-D-ERYTHRITOL 2,4-CYCLODIPHOSPHATE SYNTHASE, CHLOROPLASTIC"/>
    <property type="match status" value="1"/>
</dbReference>
<dbReference type="Pfam" id="PF02542">
    <property type="entry name" value="YgbB"/>
    <property type="match status" value="1"/>
</dbReference>
<dbReference type="SUPFAM" id="SSF69765">
    <property type="entry name" value="IpsF-like"/>
    <property type="match status" value="1"/>
</dbReference>
<dbReference type="PROSITE" id="PS01350">
    <property type="entry name" value="ISPF"/>
    <property type="match status" value="1"/>
</dbReference>
<feature type="chain" id="PRO_1000022801" description="2-C-methyl-D-erythritol 2,4-cyclodiphosphate synthase">
    <location>
        <begin position="1"/>
        <end position="161"/>
    </location>
</feature>
<feature type="binding site" evidence="1">
    <location>
        <begin position="14"/>
        <end position="16"/>
    </location>
    <ligand>
        <name>4-CDP-2-C-methyl-D-erythritol 2-phosphate</name>
        <dbReference type="ChEBI" id="CHEBI:57919"/>
    </ligand>
</feature>
<feature type="binding site" evidence="1">
    <location>
        <position position="14"/>
    </location>
    <ligand>
        <name>a divalent metal cation</name>
        <dbReference type="ChEBI" id="CHEBI:60240"/>
    </ligand>
</feature>
<feature type="binding site" evidence="1">
    <location>
        <position position="16"/>
    </location>
    <ligand>
        <name>a divalent metal cation</name>
        <dbReference type="ChEBI" id="CHEBI:60240"/>
    </ligand>
</feature>
<feature type="binding site" evidence="1">
    <location>
        <begin position="40"/>
        <end position="41"/>
    </location>
    <ligand>
        <name>4-CDP-2-C-methyl-D-erythritol 2-phosphate</name>
        <dbReference type="ChEBI" id="CHEBI:57919"/>
    </ligand>
</feature>
<feature type="binding site" evidence="1">
    <location>
        <position position="48"/>
    </location>
    <ligand>
        <name>a divalent metal cation</name>
        <dbReference type="ChEBI" id="CHEBI:60240"/>
    </ligand>
</feature>
<feature type="binding site" evidence="1">
    <location>
        <begin position="62"/>
        <end position="64"/>
    </location>
    <ligand>
        <name>4-CDP-2-C-methyl-D-erythritol 2-phosphate</name>
        <dbReference type="ChEBI" id="CHEBI:57919"/>
    </ligand>
</feature>
<feature type="binding site" evidence="1">
    <location>
        <position position="142"/>
    </location>
    <ligand>
        <name>4-CDP-2-C-methyl-D-erythritol 2-phosphate</name>
        <dbReference type="ChEBI" id="CHEBI:57919"/>
    </ligand>
</feature>
<feature type="binding site" evidence="1">
    <location>
        <position position="145"/>
    </location>
    <ligand>
        <name>4-CDP-2-C-methyl-D-erythritol 2-phosphate</name>
        <dbReference type="ChEBI" id="CHEBI:57919"/>
    </ligand>
</feature>
<feature type="site" description="Transition state stabilizer" evidence="1">
    <location>
        <position position="40"/>
    </location>
</feature>
<feature type="site" description="Transition state stabilizer" evidence="1">
    <location>
        <position position="136"/>
    </location>
</feature>
<sequence length="161" mass="16790">MTAALLPRVGIGVDVHPFSPDRPLWLAGLHWPGEPGLAGHSDADVVIHALCNALLSAAGLGDLGTQFGTAEPEWRDAAGTRLLTETVRLVRDAGYAVGNAAVQLLGERPKLRERRTEAEQLLTETVGAPIALSAATTDGLGFLGRRDGLAAVATALVFPAR</sequence>
<comment type="function">
    <text evidence="1">Involved in the biosynthesis of isopentenyl diphosphate (IPP) and dimethylallyl diphosphate (DMAPP), two major building blocks of isoprenoid compounds. Catalyzes the conversion of 4-diphosphocytidyl-2-C-methyl-D-erythritol 2-phosphate (CDP-ME2P) to 2-C-methyl-D-erythritol 2,4-cyclodiphosphate (ME-CPP) with a corresponding release of cytidine 5-monophosphate (CMP).</text>
</comment>
<comment type="catalytic activity">
    <reaction evidence="1">
        <text>4-CDP-2-C-methyl-D-erythritol 2-phosphate = 2-C-methyl-D-erythritol 2,4-cyclic diphosphate + CMP</text>
        <dbReference type="Rhea" id="RHEA:23864"/>
        <dbReference type="ChEBI" id="CHEBI:57919"/>
        <dbReference type="ChEBI" id="CHEBI:58483"/>
        <dbReference type="ChEBI" id="CHEBI:60377"/>
        <dbReference type="EC" id="4.6.1.12"/>
    </reaction>
</comment>
<comment type="cofactor">
    <cofactor evidence="1">
        <name>a divalent metal cation</name>
        <dbReference type="ChEBI" id="CHEBI:60240"/>
    </cofactor>
    <text evidence="1">Binds 1 divalent metal cation per subunit.</text>
</comment>
<comment type="pathway">
    <text evidence="1">Isoprenoid biosynthesis; isopentenyl diphosphate biosynthesis via DXP pathway; isopentenyl diphosphate from 1-deoxy-D-xylulose 5-phosphate: step 4/6.</text>
</comment>
<comment type="subunit">
    <text evidence="1">Homotrimer.</text>
</comment>
<comment type="similarity">
    <text evidence="1">Belongs to the IspF family.</text>
</comment>
<proteinExistence type="inferred from homology"/>
<gene>
    <name evidence="1" type="primary">ispF</name>
    <name type="ordered locus">Acel_0081</name>
</gene>
<organism>
    <name type="scientific">Acidothermus cellulolyticus (strain ATCC 43068 / DSM 8971 / 11B)</name>
    <dbReference type="NCBI Taxonomy" id="351607"/>
    <lineage>
        <taxon>Bacteria</taxon>
        <taxon>Bacillati</taxon>
        <taxon>Actinomycetota</taxon>
        <taxon>Actinomycetes</taxon>
        <taxon>Acidothermales</taxon>
        <taxon>Acidothermaceae</taxon>
        <taxon>Acidothermus</taxon>
    </lineage>
</organism>